<keyword id="KW-0343">GTPase activation</keyword>
<keyword id="KW-0539">Nucleus</keyword>
<keyword id="KW-0597">Phosphoprotein</keyword>
<keyword id="KW-1185">Reference proteome</keyword>
<reference key="1">
    <citation type="journal article" date="2002" name="Nature">
        <title>The genome sequence of Schizosaccharomyces pombe.</title>
        <authorList>
            <person name="Wood V."/>
            <person name="Gwilliam R."/>
            <person name="Rajandream M.A."/>
            <person name="Lyne M.H."/>
            <person name="Lyne R."/>
            <person name="Stewart A."/>
            <person name="Sgouros J.G."/>
            <person name="Peat N."/>
            <person name="Hayles J."/>
            <person name="Baker S.G."/>
            <person name="Basham D."/>
            <person name="Bowman S."/>
            <person name="Brooks K."/>
            <person name="Brown D."/>
            <person name="Brown S."/>
            <person name="Chillingworth T."/>
            <person name="Churcher C.M."/>
            <person name="Collins M."/>
            <person name="Connor R."/>
            <person name="Cronin A."/>
            <person name="Davis P."/>
            <person name="Feltwell T."/>
            <person name="Fraser A."/>
            <person name="Gentles S."/>
            <person name="Goble A."/>
            <person name="Hamlin N."/>
            <person name="Harris D.E."/>
            <person name="Hidalgo J."/>
            <person name="Hodgson G."/>
            <person name="Holroyd S."/>
            <person name="Hornsby T."/>
            <person name="Howarth S."/>
            <person name="Huckle E.J."/>
            <person name="Hunt S."/>
            <person name="Jagels K."/>
            <person name="James K.D."/>
            <person name="Jones L."/>
            <person name="Jones M."/>
            <person name="Leather S."/>
            <person name="McDonald S."/>
            <person name="McLean J."/>
            <person name="Mooney P."/>
            <person name="Moule S."/>
            <person name="Mungall K.L."/>
            <person name="Murphy L.D."/>
            <person name="Niblett D."/>
            <person name="Odell C."/>
            <person name="Oliver K."/>
            <person name="O'Neil S."/>
            <person name="Pearson D."/>
            <person name="Quail M.A."/>
            <person name="Rabbinowitsch E."/>
            <person name="Rutherford K.M."/>
            <person name="Rutter S."/>
            <person name="Saunders D."/>
            <person name="Seeger K."/>
            <person name="Sharp S."/>
            <person name="Skelton J."/>
            <person name="Simmonds M.N."/>
            <person name="Squares R."/>
            <person name="Squares S."/>
            <person name="Stevens K."/>
            <person name="Taylor K."/>
            <person name="Taylor R.G."/>
            <person name="Tivey A."/>
            <person name="Walsh S.V."/>
            <person name="Warren T."/>
            <person name="Whitehead S."/>
            <person name="Woodward J.R."/>
            <person name="Volckaert G."/>
            <person name="Aert R."/>
            <person name="Robben J."/>
            <person name="Grymonprez B."/>
            <person name="Weltjens I."/>
            <person name="Vanstreels E."/>
            <person name="Rieger M."/>
            <person name="Schaefer M."/>
            <person name="Mueller-Auer S."/>
            <person name="Gabel C."/>
            <person name="Fuchs M."/>
            <person name="Duesterhoeft A."/>
            <person name="Fritzc C."/>
            <person name="Holzer E."/>
            <person name="Moestl D."/>
            <person name="Hilbert H."/>
            <person name="Borzym K."/>
            <person name="Langer I."/>
            <person name="Beck A."/>
            <person name="Lehrach H."/>
            <person name="Reinhardt R."/>
            <person name="Pohl T.M."/>
            <person name="Eger P."/>
            <person name="Zimmermann W."/>
            <person name="Wedler H."/>
            <person name="Wambutt R."/>
            <person name="Purnelle B."/>
            <person name="Goffeau A."/>
            <person name="Cadieu E."/>
            <person name="Dreano S."/>
            <person name="Gloux S."/>
            <person name="Lelaure V."/>
            <person name="Mottier S."/>
            <person name="Galibert F."/>
            <person name="Aves S.J."/>
            <person name="Xiang Z."/>
            <person name="Hunt C."/>
            <person name="Moore K."/>
            <person name="Hurst S.M."/>
            <person name="Lucas M."/>
            <person name="Rochet M."/>
            <person name="Gaillardin C."/>
            <person name="Tallada V.A."/>
            <person name="Garzon A."/>
            <person name="Thode G."/>
            <person name="Daga R.R."/>
            <person name="Cruzado L."/>
            <person name="Jimenez J."/>
            <person name="Sanchez M."/>
            <person name="del Rey F."/>
            <person name="Benito J."/>
            <person name="Dominguez A."/>
            <person name="Revuelta J.L."/>
            <person name="Moreno S."/>
            <person name="Armstrong J."/>
            <person name="Forsburg S.L."/>
            <person name="Cerutti L."/>
            <person name="Lowe T."/>
            <person name="McCombie W.R."/>
            <person name="Paulsen I."/>
            <person name="Potashkin J."/>
            <person name="Shpakovski G.V."/>
            <person name="Ussery D."/>
            <person name="Barrell B.G."/>
            <person name="Nurse P."/>
        </authorList>
    </citation>
    <scope>NUCLEOTIDE SEQUENCE [LARGE SCALE GENOMIC DNA]</scope>
    <source>
        <strain>972 / ATCC 24843</strain>
    </source>
</reference>
<reference key="2">
    <citation type="journal article" date="2000" name="Genes Cells">
        <title>Large-scale screening of intracellular protein localization in living fission yeast cells by the use of a GFP-fusion genomic DNA library.</title>
        <authorList>
            <person name="Ding D.-Q."/>
            <person name="Tomita Y."/>
            <person name="Yamamoto A."/>
            <person name="Chikashige Y."/>
            <person name="Haraguchi T."/>
            <person name="Hiraoka Y."/>
        </authorList>
    </citation>
    <scope>NUCLEOTIDE SEQUENCE [LARGE SCALE GENOMIC DNA] OF 69-301</scope>
    <scope>SUBCELLULAR LOCATION</scope>
    <source>
        <strain>ATCC 38364 / 968</strain>
    </source>
</reference>
<reference key="3">
    <citation type="journal article" date="2001" name="Genes Cells">
        <title>Characterization of GTPase-activating proteins for the function of the Rho-family small GTPases in the fission yeast Schizosaccharomyces pombe.</title>
        <authorList>
            <person name="Nakano K."/>
            <person name="Mutoh T."/>
            <person name="Mabuchi I."/>
        </authorList>
    </citation>
    <scope>GENE NAME</scope>
</reference>
<reference key="4">
    <citation type="journal article" date="2008" name="J. Proteome Res.">
        <title>Phosphoproteome analysis of fission yeast.</title>
        <authorList>
            <person name="Wilson-Grady J.T."/>
            <person name="Villen J."/>
            <person name="Gygi S.P."/>
        </authorList>
    </citation>
    <scope>PHOSPHORYLATION [LARGE SCALE ANALYSIS] AT SER-388</scope>
    <scope>IDENTIFICATION BY MASS SPECTROMETRY</scope>
</reference>
<protein>
    <recommendedName>
        <fullName>Probable Rho-type GTPase-activating protein 2</fullName>
    </recommendedName>
</protein>
<gene>
    <name type="primary">rga2</name>
    <name type="ORF">SPAC26A3.09c</name>
</gene>
<dbReference type="EMBL" id="CU329670">
    <property type="protein sequence ID" value="CAA93232.1"/>
    <property type="molecule type" value="Genomic_DNA"/>
</dbReference>
<dbReference type="EMBL" id="AB027912">
    <property type="protein sequence ID" value="BAA87216.1"/>
    <property type="molecule type" value="Genomic_DNA"/>
</dbReference>
<dbReference type="PIR" id="T38397">
    <property type="entry name" value="T38397"/>
</dbReference>
<dbReference type="RefSeq" id="NP_594152.1">
    <property type="nucleotide sequence ID" value="NM_001019576.2"/>
</dbReference>
<dbReference type="SMR" id="Q10164"/>
<dbReference type="BioGRID" id="279135">
    <property type="interactions" value="63"/>
</dbReference>
<dbReference type="FunCoup" id="Q10164">
    <property type="interactions" value="430"/>
</dbReference>
<dbReference type="STRING" id="284812.Q10164"/>
<dbReference type="iPTMnet" id="Q10164"/>
<dbReference type="PaxDb" id="4896-SPAC26A3.09c.1"/>
<dbReference type="EnsemblFungi" id="SPAC26A3.09c.1">
    <property type="protein sequence ID" value="SPAC26A3.09c.1:pep"/>
    <property type="gene ID" value="SPAC26A3.09c"/>
</dbReference>
<dbReference type="GeneID" id="2542682"/>
<dbReference type="KEGG" id="spo:2542682"/>
<dbReference type="PomBase" id="SPAC26A3.09c">
    <property type="gene designation" value="rga2"/>
</dbReference>
<dbReference type="VEuPathDB" id="FungiDB:SPAC26A3.09c"/>
<dbReference type="eggNOG" id="KOG4269">
    <property type="taxonomic scope" value="Eukaryota"/>
</dbReference>
<dbReference type="HOGENOM" id="CLU_283724_0_0_1"/>
<dbReference type="InParanoid" id="Q10164"/>
<dbReference type="Reactome" id="R-SPO-6798695">
    <property type="pathway name" value="Neutrophil degranulation"/>
</dbReference>
<dbReference type="Reactome" id="R-SPO-8980692">
    <property type="pathway name" value="RHOA GTPase cycle"/>
</dbReference>
<dbReference type="Reactome" id="R-SPO-9013148">
    <property type="pathway name" value="CDC42 GTPase cycle"/>
</dbReference>
<dbReference type="Reactome" id="R-SPO-9013405">
    <property type="pathway name" value="RHOD GTPase cycle"/>
</dbReference>
<dbReference type="Reactome" id="R-SPO-9013424">
    <property type="pathway name" value="RHOV GTPase cycle"/>
</dbReference>
<dbReference type="Reactome" id="R-SPO-9035034">
    <property type="pathway name" value="RHOF GTPase cycle"/>
</dbReference>
<dbReference type="PRO" id="PR:Q10164"/>
<dbReference type="Proteomes" id="UP000002485">
    <property type="component" value="Chromosome I"/>
</dbReference>
<dbReference type="GO" id="GO:0005938">
    <property type="term" value="C:cell cortex"/>
    <property type="evidence" value="ECO:0000318"/>
    <property type="project" value="GO_Central"/>
</dbReference>
<dbReference type="GO" id="GO:0032153">
    <property type="term" value="C:cell division site"/>
    <property type="evidence" value="ECO:0007005"/>
    <property type="project" value="PomBase"/>
</dbReference>
<dbReference type="GO" id="GO:0051286">
    <property type="term" value="C:cell tip"/>
    <property type="evidence" value="ECO:0007005"/>
    <property type="project" value="PomBase"/>
</dbReference>
<dbReference type="GO" id="GO:0005737">
    <property type="term" value="C:cytoplasm"/>
    <property type="evidence" value="ECO:0000314"/>
    <property type="project" value="PomBase"/>
</dbReference>
<dbReference type="GO" id="GO:0035838">
    <property type="term" value="C:growing cell tip"/>
    <property type="evidence" value="ECO:0000314"/>
    <property type="project" value="PomBase"/>
</dbReference>
<dbReference type="GO" id="GO:0110085">
    <property type="term" value="C:mitotic actomyosin contractile ring"/>
    <property type="evidence" value="ECO:0000314"/>
    <property type="project" value="PomBase"/>
</dbReference>
<dbReference type="GO" id="GO:0120105">
    <property type="term" value="C:mitotic actomyosin contractile ring, intermediate layer"/>
    <property type="evidence" value="ECO:0000314"/>
    <property type="project" value="PomBase"/>
</dbReference>
<dbReference type="GO" id="GO:0005634">
    <property type="term" value="C:nucleus"/>
    <property type="evidence" value="ECO:0007669"/>
    <property type="project" value="UniProtKB-SubCell"/>
</dbReference>
<dbReference type="GO" id="GO:0005886">
    <property type="term" value="C:plasma membrane"/>
    <property type="evidence" value="ECO:0000318"/>
    <property type="project" value="GO_Central"/>
</dbReference>
<dbReference type="GO" id="GO:0030427">
    <property type="term" value="C:site of polarized growth"/>
    <property type="evidence" value="ECO:0000318"/>
    <property type="project" value="GO_Central"/>
</dbReference>
<dbReference type="GO" id="GO:0005096">
    <property type="term" value="F:GTPase activator activity"/>
    <property type="evidence" value="ECO:0000314"/>
    <property type="project" value="PomBase"/>
</dbReference>
<dbReference type="GO" id="GO:0008289">
    <property type="term" value="F:lipid binding"/>
    <property type="evidence" value="ECO:0000255"/>
    <property type="project" value="PomBase"/>
</dbReference>
<dbReference type="GO" id="GO:0070610">
    <property type="term" value="P:regulation of fungal-type cell wall (1-&gt;3)-alpha-glucan biosynthetic process"/>
    <property type="evidence" value="ECO:0000315"/>
    <property type="project" value="PomBase"/>
</dbReference>
<dbReference type="GO" id="GO:0007264">
    <property type="term" value="P:small GTPase-mediated signal transduction"/>
    <property type="evidence" value="ECO:0000318"/>
    <property type="project" value="GO_Central"/>
</dbReference>
<dbReference type="CDD" id="cd04400">
    <property type="entry name" value="RhoGAP_fBEM3"/>
    <property type="match status" value="1"/>
</dbReference>
<dbReference type="Gene3D" id="2.30.29.30">
    <property type="entry name" value="Pleckstrin-homology domain (PH domain)/Phosphotyrosine-binding domain (PTB)"/>
    <property type="match status" value="1"/>
</dbReference>
<dbReference type="Gene3D" id="1.10.555.10">
    <property type="entry name" value="Rho GTPase activation protein"/>
    <property type="match status" value="1"/>
</dbReference>
<dbReference type="InterPro" id="IPR011993">
    <property type="entry name" value="PH-like_dom_sf"/>
</dbReference>
<dbReference type="InterPro" id="IPR001849">
    <property type="entry name" value="PH_domain"/>
</dbReference>
<dbReference type="InterPro" id="IPR050729">
    <property type="entry name" value="Rho-GAP"/>
</dbReference>
<dbReference type="InterPro" id="IPR008936">
    <property type="entry name" value="Rho_GTPase_activation_prot"/>
</dbReference>
<dbReference type="InterPro" id="IPR000198">
    <property type="entry name" value="RhoGAP_dom"/>
</dbReference>
<dbReference type="PANTHER" id="PTHR23176:SF129">
    <property type="entry name" value="RHO GTPASE ACTIVATING PROTEIN AT 16F, ISOFORM E-RELATED"/>
    <property type="match status" value="1"/>
</dbReference>
<dbReference type="PANTHER" id="PTHR23176">
    <property type="entry name" value="RHO/RAC/CDC GTPASE-ACTIVATING PROTEIN"/>
    <property type="match status" value="1"/>
</dbReference>
<dbReference type="Pfam" id="PF00169">
    <property type="entry name" value="PH"/>
    <property type="match status" value="1"/>
</dbReference>
<dbReference type="Pfam" id="PF00620">
    <property type="entry name" value="RhoGAP"/>
    <property type="match status" value="1"/>
</dbReference>
<dbReference type="SMART" id="SM00233">
    <property type="entry name" value="PH"/>
    <property type="match status" value="1"/>
</dbReference>
<dbReference type="SMART" id="SM00324">
    <property type="entry name" value="RhoGAP"/>
    <property type="match status" value="1"/>
</dbReference>
<dbReference type="SUPFAM" id="SSF48350">
    <property type="entry name" value="GTPase activation domain, GAP"/>
    <property type="match status" value="1"/>
</dbReference>
<dbReference type="SUPFAM" id="SSF50729">
    <property type="entry name" value="PH domain-like"/>
    <property type="match status" value="1"/>
</dbReference>
<dbReference type="PROSITE" id="PS50003">
    <property type="entry name" value="PH_DOMAIN"/>
    <property type="match status" value="1"/>
</dbReference>
<dbReference type="PROSITE" id="PS50238">
    <property type="entry name" value="RHOGAP"/>
    <property type="match status" value="1"/>
</dbReference>
<feature type="chain" id="PRO_0000097312" description="Probable Rho-type GTPase-activating protein 2">
    <location>
        <begin position="1"/>
        <end position="1275"/>
    </location>
</feature>
<feature type="domain" description="PH" evidence="1">
    <location>
        <begin position="719"/>
        <end position="836"/>
    </location>
</feature>
<feature type="domain" description="Rho-GAP" evidence="2">
    <location>
        <begin position="1065"/>
        <end position="1275"/>
    </location>
</feature>
<feature type="region of interest" description="Disordered" evidence="3">
    <location>
        <begin position="118"/>
        <end position="146"/>
    </location>
</feature>
<feature type="region of interest" description="Disordered" evidence="3">
    <location>
        <begin position="213"/>
        <end position="238"/>
    </location>
</feature>
<feature type="region of interest" description="Disordered" evidence="3">
    <location>
        <begin position="280"/>
        <end position="306"/>
    </location>
</feature>
<feature type="region of interest" description="Disordered" evidence="3">
    <location>
        <begin position="335"/>
        <end position="365"/>
    </location>
</feature>
<feature type="region of interest" description="Disordered" evidence="3">
    <location>
        <begin position="390"/>
        <end position="466"/>
    </location>
</feature>
<feature type="region of interest" description="Disordered" evidence="3">
    <location>
        <begin position="539"/>
        <end position="561"/>
    </location>
</feature>
<feature type="region of interest" description="Disordered" evidence="3">
    <location>
        <begin position="957"/>
        <end position="988"/>
    </location>
</feature>
<feature type="region of interest" description="Disordered" evidence="3">
    <location>
        <begin position="1254"/>
        <end position="1275"/>
    </location>
</feature>
<feature type="compositionally biased region" description="Polar residues" evidence="3">
    <location>
        <begin position="122"/>
        <end position="143"/>
    </location>
</feature>
<feature type="compositionally biased region" description="Polar residues" evidence="3">
    <location>
        <begin position="290"/>
        <end position="299"/>
    </location>
</feature>
<feature type="compositionally biased region" description="Polar residues" evidence="3">
    <location>
        <begin position="353"/>
        <end position="364"/>
    </location>
</feature>
<feature type="compositionally biased region" description="Polar residues" evidence="3">
    <location>
        <begin position="450"/>
        <end position="466"/>
    </location>
</feature>
<feature type="compositionally biased region" description="Polar residues" evidence="3">
    <location>
        <begin position="552"/>
        <end position="561"/>
    </location>
</feature>
<feature type="compositionally biased region" description="Basic and acidic residues" evidence="3">
    <location>
        <begin position="957"/>
        <end position="971"/>
    </location>
</feature>
<feature type="compositionally biased region" description="Acidic residues" evidence="3">
    <location>
        <begin position="1260"/>
        <end position="1275"/>
    </location>
</feature>
<feature type="site" description="Arginine finger; crucial for GTP hydrolysis by stabilizing the transition state" evidence="2">
    <location>
        <position position="1106"/>
    </location>
</feature>
<feature type="modified residue" description="Phosphoserine" evidence="5">
    <location>
        <position position="388"/>
    </location>
</feature>
<sequence length="1275" mass="143588">MVKMDVVRTTGFFLRSEPTTCRITTFAYSAEIIYFHAETTFLFEKIMKEGNELEKYSKIELNSEIWEDEEEEDNSGIVSQNERLMKLVNKQREIIYELHKDLEKVKKDNTSLRMRLSKYESTDSFPSSQPSRANSPQSDSYSSPYEKGKLFPKISLKSSKDVPTASAHISSSDHEKSSSVSLSALNNYNKTTDIKARSLDRLSDMTRPKLLLNTKRSHRSSEEPGASSPVTSPILKDSQKERIQALRNKAIKTYSVSTESAERIDSIRSDNLSPLSLNTSSFRRPITKPTPFNSDSNISIDPKDNNSNKQDHFAEIEDELRQQFLDIKVGRANASSPRRKSISIVKPHGISSPKHSTNNLSSKSGKFHSDFRVVSENVLLQARSETNSPIIENKEANNFLAPTSNVPAYSTPARPTESPPPPPISSSSTTPRPDDKPSLPPRGLSEDNDSLSLQKTGSSDTRRSSFSTLKIPDSDICFTRRRSDSNRTWTVIDPHHSQSFDNDILAEIPTSKLDNSSQKSPGKLSSKGLLNSFSPISPFSKSKSHNHHPSSQVEKSTSNSKGSMLPLDTLYNNKLSFRLDESLVRYLRFELMKTSLASLSPDFDCIGLQFVVGVSASSHLASQWKDEVWSFTRSIGECRSFATSFVLDIGAPPFPTLDWFTNDSSVIQNELLRRSVDTYFRYIFQTDLKLEQRIKLLEFLSSDTLREYLHDVFFLPPEHAQKEGVLLKYIENSGLVSRYFYLKDNILYFAENRNSPVLGTIHLKDAQVNRYNANLPIFSIIDPPHEFLTGENYQSAFVIQEKQTETRTGTATVHVLLARDVEDQKSWLRAILRQVPGSTSPLNASPFSVLSSDFPGSSRYRDQSSPIRFYGKADSRPVSQEAILSQDISSSPSPVLPPSENVASYADDSLVSNLTMSPKLRDSMEQVPLENHREFEISDRVSELSFDSSTGSVLEIADTRRNQDAPEKHVPVIEIQSSRPSLEKTDQSTPVELLIDSHSQNSQNEEKRSRMKFWAFPHHKAENYEQISDTNIPVIETNVMLSPSSTTSAEPLQKHIVRKSGIFGLPLNEAVNISTQFNDSGLPIVVYRCIEYLESCRAEKEEGIYRLSGSASTIKHLKEQFNEGVDYDLLSSDEEFDVHVIAGLLKLYLRNLPTNLLDTSMHKLFELLPNVPNDSAALGELCDVISKLPPENFALLDSLLHHLRRIIAFEKVNKMNIRNVCIVFSPTLNIPSDIFMMLILNYDHIFTDISRQTNGAQNESDSDVSDDNGEDNEFF</sequence>
<comment type="function">
    <text evidence="6">GTPase-activating protein for Rho-type proteins.</text>
</comment>
<comment type="subcellular location">
    <subcellularLocation>
        <location evidence="4">Nucleus</location>
    </subcellularLocation>
</comment>
<accession>Q10164</accession>
<accession>Q9USA5</accession>
<proteinExistence type="evidence at protein level"/>
<evidence type="ECO:0000255" key="1">
    <source>
        <dbReference type="PROSITE-ProRule" id="PRU00145"/>
    </source>
</evidence>
<evidence type="ECO:0000255" key="2">
    <source>
        <dbReference type="PROSITE-ProRule" id="PRU00172"/>
    </source>
</evidence>
<evidence type="ECO:0000256" key="3">
    <source>
        <dbReference type="SAM" id="MobiDB-lite"/>
    </source>
</evidence>
<evidence type="ECO:0000269" key="4">
    <source>
    </source>
</evidence>
<evidence type="ECO:0000269" key="5">
    <source>
    </source>
</evidence>
<evidence type="ECO:0000305" key="6"/>
<name>RGA2_SCHPO</name>
<organism>
    <name type="scientific">Schizosaccharomyces pombe (strain 972 / ATCC 24843)</name>
    <name type="common">Fission yeast</name>
    <dbReference type="NCBI Taxonomy" id="284812"/>
    <lineage>
        <taxon>Eukaryota</taxon>
        <taxon>Fungi</taxon>
        <taxon>Dikarya</taxon>
        <taxon>Ascomycota</taxon>
        <taxon>Taphrinomycotina</taxon>
        <taxon>Schizosaccharomycetes</taxon>
        <taxon>Schizosaccharomycetales</taxon>
        <taxon>Schizosaccharomycetaceae</taxon>
        <taxon>Schizosaccharomyces</taxon>
    </lineage>
</organism>